<keyword id="KW-0963">Cytoplasm</keyword>
<keyword id="KW-0275">Fatty acid biosynthesis</keyword>
<keyword id="KW-0276">Fatty acid metabolism</keyword>
<keyword id="KW-0444">Lipid biosynthesis</keyword>
<keyword id="KW-0443">Lipid metabolism</keyword>
<keyword id="KW-0460">Magnesium</keyword>
<keyword id="KW-0479">Metal-binding</keyword>
<keyword id="KW-0808">Transferase</keyword>
<sequence length="119" mass="13100">MIVGIGIDIIELNRIEKMLDGKLKFMERILTENERNVAKGLKGSRLTEFVAGRFAAKEAYSKAVGTGIGKEVSFLDIEVRNDDRGKPILITSTEHIVHLSISHSKEFAVAQVVLESSSS</sequence>
<feature type="chain" id="PRO_1000118792" description="Holo-[acyl-carrier-protein] synthase">
    <location>
        <begin position="1"/>
        <end position="119"/>
    </location>
</feature>
<feature type="binding site" evidence="1">
    <location>
        <position position="8"/>
    </location>
    <ligand>
        <name>Mg(2+)</name>
        <dbReference type="ChEBI" id="CHEBI:18420"/>
    </ligand>
</feature>
<feature type="binding site" evidence="1">
    <location>
        <position position="58"/>
    </location>
    <ligand>
        <name>Mg(2+)</name>
        <dbReference type="ChEBI" id="CHEBI:18420"/>
    </ligand>
</feature>
<gene>
    <name evidence="1" type="primary">acpS</name>
    <name type="ordered locus">BCA_0287</name>
</gene>
<comment type="function">
    <text evidence="1">Transfers the 4'-phosphopantetheine moiety from coenzyme A to a Ser of acyl-carrier-protein.</text>
</comment>
<comment type="catalytic activity">
    <reaction evidence="1">
        <text>apo-[ACP] + CoA = holo-[ACP] + adenosine 3',5'-bisphosphate + H(+)</text>
        <dbReference type="Rhea" id="RHEA:12068"/>
        <dbReference type="Rhea" id="RHEA-COMP:9685"/>
        <dbReference type="Rhea" id="RHEA-COMP:9690"/>
        <dbReference type="ChEBI" id="CHEBI:15378"/>
        <dbReference type="ChEBI" id="CHEBI:29999"/>
        <dbReference type="ChEBI" id="CHEBI:57287"/>
        <dbReference type="ChEBI" id="CHEBI:58343"/>
        <dbReference type="ChEBI" id="CHEBI:64479"/>
        <dbReference type="EC" id="2.7.8.7"/>
    </reaction>
</comment>
<comment type="cofactor">
    <cofactor evidence="1">
        <name>Mg(2+)</name>
        <dbReference type="ChEBI" id="CHEBI:18420"/>
    </cofactor>
</comment>
<comment type="subcellular location">
    <subcellularLocation>
        <location evidence="1">Cytoplasm</location>
    </subcellularLocation>
</comment>
<comment type="similarity">
    <text evidence="1">Belongs to the P-Pant transferase superfamily. AcpS family.</text>
</comment>
<protein>
    <recommendedName>
        <fullName evidence="1">Holo-[acyl-carrier-protein] synthase</fullName>
        <shortName evidence="1">Holo-ACP synthase</shortName>
        <ecNumber evidence="1">2.7.8.7</ecNumber>
    </recommendedName>
    <alternativeName>
        <fullName evidence="1">4'-phosphopantetheinyl transferase AcpS</fullName>
    </alternativeName>
</protein>
<reference key="1">
    <citation type="submission" date="2009-02" db="EMBL/GenBank/DDBJ databases">
        <title>Genome sequence of Bacillus cereus 03BB102.</title>
        <authorList>
            <person name="Dodson R.J."/>
            <person name="Jackson P."/>
            <person name="Munk A.C."/>
            <person name="Brettin T."/>
            <person name="Bruce D."/>
            <person name="Detter C."/>
            <person name="Tapia R."/>
            <person name="Han C."/>
            <person name="Sutton G."/>
            <person name="Sims D."/>
        </authorList>
    </citation>
    <scope>NUCLEOTIDE SEQUENCE [LARGE SCALE GENOMIC DNA]</scope>
    <source>
        <strain>03BB102</strain>
    </source>
</reference>
<evidence type="ECO:0000255" key="1">
    <source>
        <dbReference type="HAMAP-Rule" id="MF_00101"/>
    </source>
</evidence>
<proteinExistence type="inferred from homology"/>
<accession>C1EU95</accession>
<dbReference type="EC" id="2.7.8.7" evidence="1"/>
<dbReference type="EMBL" id="CP001407">
    <property type="protein sequence ID" value="ACO28344.1"/>
    <property type="molecule type" value="Genomic_DNA"/>
</dbReference>
<dbReference type="RefSeq" id="WP_000635040.1">
    <property type="nucleotide sequence ID" value="NZ_CP009318.1"/>
</dbReference>
<dbReference type="SMR" id="C1EU95"/>
<dbReference type="GeneID" id="45020288"/>
<dbReference type="KEGG" id="bcx:BCA_0287"/>
<dbReference type="PATRIC" id="fig|572264.18.peg.311"/>
<dbReference type="Proteomes" id="UP000002210">
    <property type="component" value="Chromosome"/>
</dbReference>
<dbReference type="GO" id="GO:0005829">
    <property type="term" value="C:cytosol"/>
    <property type="evidence" value="ECO:0007669"/>
    <property type="project" value="TreeGrafter"/>
</dbReference>
<dbReference type="GO" id="GO:0008897">
    <property type="term" value="F:holo-[acyl-carrier-protein] synthase activity"/>
    <property type="evidence" value="ECO:0007669"/>
    <property type="project" value="UniProtKB-UniRule"/>
</dbReference>
<dbReference type="GO" id="GO:0000287">
    <property type="term" value="F:magnesium ion binding"/>
    <property type="evidence" value="ECO:0007669"/>
    <property type="project" value="UniProtKB-UniRule"/>
</dbReference>
<dbReference type="GO" id="GO:0006633">
    <property type="term" value="P:fatty acid biosynthetic process"/>
    <property type="evidence" value="ECO:0007669"/>
    <property type="project" value="UniProtKB-UniRule"/>
</dbReference>
<dbReference type="GO" id="GO:0019878">
    <property type="term" value="P:lysine biosynthetic process via aminoadipic acid"/>
    <property type="evidence" value="ECO:0007669"/>
    <property type="project" value="TreeGrafter"/>
</dbReference>
<dbReference type="Gene3D" id="3.90.470.20">
    <property type="entry name" value="4'-phosphopantetheinyl transferase domain"/>
    <property type="match status" value="1"/>
</dbReference>
<dbReference type="HAMAP" id="MF_00101">
    <property type="entry name" value="AcpS"/>
    <property type="match status" value="1"/>
</dbReference>
<dbReference type="InterPro" id="IPR008278">
    <property type="entry name" value="4-PPantetheinyl_Trfase_dom"/>
</dbReference>
<dbReference type="InterPro" id="IPR037143">
    <property type="entry name" value="4-PPantetheinyl_Trfase_dom_sf"/>
</dbReference>
<dbReference type="InterPro" id="IPR002582">
    <property type="entry name" value="ACPS"/>
</dbReference>
<dbReference type="InterPro" id="IPR050559">
    <property type="entry name" value="P-Pant_transferase_sf"/>
</dbReference>
<dbReference type="InterPro" id="IPR004568">
    <property type="entry name" value="Ppantetheine-prot_Trfase_dom"/>
</dbReference>
<dbReference type="NCBIfam" id="TIGR00516">
    <property type="entry name" value="acpS"/>
    <property type="match status" value="1"/>
</dbReference>
<dbReference type="NCBIfam" id="TIGR00556">
    <property type="entry name" value="pantethn_trn"/>
    <property type="match status" value="1"/>
</dbReference>
<dbReference type="PANTHER" id="PTHR12215:SF10">
    <property type="entry name" value="L-AMINOADIPATE-SEMIALDEHYDE DEHYDROGENASE-PHOSPHOPANTETHEINYL TRANSFERASE"/>
    <property type="match status" value="1"/>
</dbReference>
<dbReference type="PANTHER" id="PTHR12215">
    <property type="entry name" value="PHOSPHOPANTETHEINE TRANSFERASE"/>
    <property type="match status" value="1"/>
</dbReference>
<dbReference type="Pfam" id="PF01648">
    <property type="entry name" value="ACPS"/>
    <property type="match status" value="1"/>
</dbReference>
<dbReference type="SUPFAM" id="SSF56214">
    <property type="entry name" value="4'-phosphopantetheinyl transferase"/>
    <property type="match status" value="1"/>
</dbReference>
<organism>
    <name type="scientific">Bacillus cereus (strain 03BB102)</name>
    <dbReference type="NCBI Taxonomy" id="572264"/>
    <lineage>
        <taxon>Bacteria</taxon>
        <taxon>Bacillati</taxon>
        <taxon>Bacillota</taxon>
        <taxon>Bacilli</taxon>
        <taxon>Bacillales</taxon>
        <taxon>Bacillaceae</taxon>
        <taxon>Bacillus</taxon>
        <taxon>Bacillus cereus group</taxon>
    </lineage>
</organism>
<name>ACPS_BACC3</name>